<accession>Q14576</accession>
<accession>Q16135</accession>
<accession>Q96CL8</accession>
<accession>Q96QS9</accession>
<evidence type="ECO:0000250" key="1"/>
<evidence type="ECO:0000250" key="2">
    <source>
        <dbReference type="UniProtKB" id="Q60900"/>
    </source>
</evidence>
<evidence type="ECO:0000255" key="3">
    <source>
        <dbReference type="PROSITE-ProRule" id="PRU00176"/>
    </source>
</evidence>
<evidence type="ECO:0000269" key="4">
    <source>
    </source>
</evidence>
<evidence type="ECO:0000303" key="5">
    <source>
    </source>
</evidence>
<evidence type="ECO:0000303" key="6">
    <source ref="1"/>
</evidence>
<evidence type="ECO:0000303" key="7">
    <source ref="2"/>
</evidence>
<evidence type="ECO:0000305" key="8"/>
<dbReference type="EMBL" id="L26405">
    <property type="protein sequence ID" value="AAA58677.1"/>
    <property type="molecule type" value="mRNA"/>
</dbReference>
<dbReference type="EMBL" id="AY036909">
    <property type="protein sequence ID" value="AAK67714.1"/>
    <property type="molecule type" value="mRNA"/>
</dbReference>
<dbReference type="EMBL" id="AC008481">
    <property type="status" value="NOT_ANNOTATED_CDS"/>
    <property type="molecule type" value="Genomic_DNA"/>
</dbReference>
<dbReference type="EMBL" id="BC014144">
    <property type="status" value="NOT_ANNOTATED_CDS"/>
    <property type="molecule type" value="mRNA"/>
</dbReference>
<dbReference type="EMBL" id="D26158">
    <property type="protein sequence ID" value="BAA21838.1"/>
    <property type="molecule type" value="mRNA"/>
</dbReference>
<dbReference type="CCDS" id="CCDS32912.1">
    <molecule id="Q14576-1"/>
</dbReference>
<dbReference type="CCDS" id="CCDS45978.1">
    <molecule id="Q14576-2"/>
</dbReference>
<dbReference type="RefSeq" id="NP_001411.2">
    <molecule id="Q14576-1"/>
    <property type="nucleotide sequence ID" value="NM_001420.3"/>
</dbReference>
<dbReference type="RefSeq" id="NP_115657.2">
    <molecule id="Q14576-2"/>
    <property type="nucleotide sequence ID" value="NM_032281.2"/>
</dbReference>
<dbReference type="SMR" id="Q14576"/>
<dbReference type="BioGRID" id="108310">
    <property type="interactions" value="22"/>
</dbReference>
<dbReference type="FunCoup" id="Q14576">
    <property type="interactions" value="312"/>
</dbReference>
<dbReference type="IntAct" id="Q14576">
    <property type="interactions" value="21"/>
</dbReference>
<dbReference type="MINT" id="Q14576"/>
<dbReference type="STRING" id="9606.ENSP00000352162"/>
<dbReference type="BindingDB" id="Q14576"/>
<dbReference type="ChEMBL" id="CHEMBL4105924"/>
<dbReference type="DrugCentral" id="Q14576"/>
<dbReference type="iPTMnet" id="Q14576"/>
<dbReference type="PhosphoSitePlus" id="Q14576"/>
<dbReference type="BioMuta" id="ELAVL3"/>
<dbReference type="DMDM" id="21264436"/>
<dbReference type="jPOST" id="Q14576"/>
<dbReference type="MassIVE" id="Q14576"/>
<dbReference type="PaxDb" id="9606-ENSP00000352162"/>
<dbReference type="PeptideAtlas" id="Q14576"/>
<dbReference type="ProteomicsDB" id="60054">
    <molecule id="Q14576-1"/>
</dbReference>
<dbReference type="ProteomicsDB" id="60055">
    <molecule id="Q14576-2"/>
</dbReference>
<dbReference type="Antibodypedia" id="25887">
    <property type="antibodies" value="174 antibodies from 27 providers"/>
</dbReference>
<dbReference type="DNASU" id="1995"/>
<dbReference type="Ensembl" id="ENST00000359227.8">
    <molecule id="Q14576-1"/>
    <property type="protein sequence ID" value="ENSP00000352162.1"/>
    <property type="gene ID" value="ENSG00000196361.10"/>
</dbReference>
<dbReference type="Ensembl" id="ENST00000438662.6">
    <molecule id="Q14576-2"/>
    <property type="protein sequence ID" value="ENSP00000390878.1"/>
    <property type="gene ID" value="ENSG00000196361.10"/>
</dbReference>
<dbReference type="GeneID" id="1995"/>
<dbReference type="KEGG" id="hsa:1995"/>
<dbReference type="MANE-Select" id="ENST00000359227.8">
    <property type="protein sequence ID" value="ENSP00000352162.1"/>
    <property type="RefSeq nucleotide sequence ID" value="NM_001420.4"/>
    <property type="RefSeq protein sequence ID" value="NP_001411.2"/>
</dbReference>
<dbReference type="UCSC" id="uc002mrx.2">
    <molecule id="Q14576-1"/>
    <property type="organism name" value="human"/>
</dbReference>
<dbReference type="AGR" id="HGNC:3314"/>
<dbReference type="CTD" id="1995"/>
<dbReference type="DisGeNET" id="1995"/>
<dbReference type="GeneCards" id="ELAVL3"/>
<dbReference type="HGNC" id="HGNC:3314">
    <property type="gene designation" value="ELAVL3"/>
</dbReference>
<dbReference type="HPA" id="ENSG00000196361">
    <property type="expression patterns" value="Tissue enriched (brain)"/>
</dbReference>
<dbReference type="MIM" id="603458">
    <property type="type" value="gene"/>
</dbReference>
<dbReference type="neXtProt" id="NX_Q14576"/>
<dbReference type="OpenTargets" id="ENSG00000196361"/>
<dbReference type="PharmGKB" id="PA27742"/>
<dbReference type="VEuPathDB" id="HostDB:ENSG00000196361"/>
<dbReference type="eggNOG" id="KOG0145">
    <property type="taxonomic scope" value="Eukaryota"/>
</dbReference>
<dbReference type="GeneTree" id="ENSGT00940000160389"/>
<dbReference type="HOGENOM" id="CLU_026186_2_2_1"/>
<dbReference type="InParanoid" id="Q14576"/>
<dbReference type="OMA" id="YNQRRED"/>
<dbReference type="OrthoDB" id="266020at2759"/>
<dbReference type="PAN-GO" id="Q14576">
    <property type="GO annotations" value="0 GO annotations based on evolutionary models"/>
</dbReference>
<dbReference type="PhylomeDB" id="Q14576"/>
<dbReference type="TreeFam" id="TF313377"/>
<dbReference type="PathwayCommons" id="Q14576"/>
<dbReference type="SignaLink" id="Q14576"/>
<dbReference type="SIGNOR" id="Q14576"/>
<dbReference type="BioGRID-ORCS" id="1995">
    <property type="hits" value="11 hits in 1142 CRISPR screens"/>
</dbReference>
<dbReference type="CD-CODE" id="DEE660B4">
    <property type="entry name" value="Stress granule"/>
</dbReference>
<dbReference type="ChiTaRS" id="ELAVL3">
    <property type="organism name" value="human"/>
</dbReference>
<dbReference type="GeneWiki" id="ELAVL3"/>
<dbReference type="GenomeRNAi" id="1995"/>
<dbReference type="Pharos" id="Q14576">
    <property type="development level" value="Tchem"/>
</dbReference>
<dbReference type="PRO" id="PR:Q14576"/>
<dbReference type="Proteomes" id="UP000005640">
    <property type="component" value="Chromosome 19"/>
</dbReference>
<dbReference type="RNAct" id="Q14576">
    <property type="molecule type" value="protein"/>
</dbReference>
<dbReference type="Bgee" id="ENSG00000196361">
    <property type="expression patterns" value="Expressed in inferior vagus X ganglion and 188 other cell types or tissues"/>
</dbReference>
<dbReference type="ExpressionAtlas" id="Q14576">
    <property type="expression patterns" value="baseline and differential"/>
</dbReference>
<dbReference type="GO" id="GO:1990904">
    <property type="term" value="C:ribonucleoprotein complex"/>
    <property type="evidence" value="ECO:0007669"/>
    <property type="project" value="InterPro"/>
</dbReference>
<dbReference type="GO" id="GO:0035925">
    <property type="term" value="F:mRNA 3'-UTR AU-rich region binding"/>
    <property type="evidence" value="ECO:0000314"/>
    <property type="project" value="GO_Central"/>
</dbReference>
<dbReference type="GO" id="GO:0030154">
    <property type="term" value="P:cell differentiation"/>
    <property type="evidence" value="ECO:0007669"/>
    <property type="project" value="UniProtKB-KW"/>
</dbReference>
<dbReference type="GO" id="GO:0007399">
    <property type="term" value="P:nervous system development"/>
    <property type="evidence" value="ECO:0007669"/>
    <property type="project" value="UniProtKB-KW"/>
</dbReference>
<dbReference type="CDD" id="cd12772">
    <property type="entry name" value="RRM1_HuC"/>
    <property type="match status" value="1"/>
</dbReference>
<dbReference type="CDD" id="cd12776">
    <property type="entry name" value="RRM2_HuC"/>
    <property type="match status" value="1"/>
</dbReference>
<dbReference type="CDD" id="cd12655">
    <property type="entry name" value="RRM3_HuC"/>
    <property type="match status" value="1"/>
</dbReference>
<dbReference type="FunFam" id="3.30.70.330:FF:000006">
    <property type="entry name" value="ELAV-like 3"/>
    <property type="match status" value="1"/>
</dbReference>
<dbReference type="FunFam" id="3.30.70.330:FF:000005">
    <property type="entry name" value="ELAV-like protein"/>
    <property type="match status" value="1"/>
</dbReference>
<dbReference type="FunFam" id="3.30.70.330:FF:000017">
    <property type="entry name" value="ELAV-like protein"/>
    <property type="match status" value="1"/>
</dbReference>
<dbReference type="Gene3D" id="3.30.70.330">
    <property type="match status" value="3"/>
</dbReference>
<dbReference type="InterPro" id="IPR006548">
    <property type="entry name" value="ELAD_HU_SF"/>
</dbReference>
<dbReference type="InterPro" id="IPR034915">
    <property type="entry name" value="HuC_RRM3"/>
</dbReference>
<dbReference type="InterPro" id="IPR002343">
    <property type="entry name" value="Hud_Sxl_RNA"/>
</dbReference>
<dbReference type="InterPro" id="IPR012677">
    <property type="entry name" value="Nucleotide-bd_a/b_plait_sf"/>
</dbReference>
<dbReference type="InterPro" id="IPR035979">
    <property type="entry name" value="RBD_domain_sf"/>
</dbReference>
<dbReference type="InterPro" id="IPR000504">
    <property type="entry name" value="RRM_dom"/>
</dbReference>
<dbReference type="InterPro" id="IPR003954">
    <property type="entry name" value="RRM_dom_euk"/>
</dbReference>
<dbReference type="NCBIfam" id="TIGR01661">
    <property type="entry name" value="ELAV_HUD_SF"/>
    <property type="match status" value="1"/>
</dbReference>
<dbReference type="PANTHER" id="PTHR10352">
    <property type="entry name" value="EUKARYOTIC TRANSLATION INITIATION FACTOR 3 SUBUNIT G"/>
    <property type="match status" value="1"/>
</dbReference>
<dbReference type="Pfam" id="PF00076">
    <property type="entry name" value="RRM_1"/>
    <property type="match status" value="3"/>
</dbReference>
<dbReference type="PRINTS" id="PR00961">
    <property type="entry name" value="HUDSXLRNA"/>
</dbReference>
<dbReference type="SMART" id="SM00360">
    <property type="entry name" value="RRM"/>
    <property type="match status" value="3"/>
</dbReference>
<dbReference type="SMART" id="SM00361">
    <property type="entry name" value="RRM_1"/>
    <property type="match status" value="2"/>
</dbReference>
<dbReference type="SUPFAM" id="SSF54928">
    <property type="entry name" value="RNA-binding domain, RBD"/>
    <property type="match status" value="2"/>
</dbReference>
<dbReference type="PROSITE" id="PS50102">
    <property type="entry name" value="RRM"/>
    <property type="match status" value="3"/>
</dbReference>
<protein>
    <recommendedName>
        <fullName>ELAV-like protein 3</fullName>
    </recommendedName>
    <alternativeName>
        <fullName>Hu-antigen C</fullName>
        <shortName>HuC</shortName>
    </alternativeName>
    <alternativeName>
        <fullName>Paraneoplastic cerebellar degeneration-associated antigen</fullName>
    </alternativeName>
    <alternativeName>
        <fullName>Paraneoplastic limbic encephalitis antigen 21</fullName>
    </alternativeName>
</protein>
<name>ELAV3_HUMAN</name>
<organism>
    <name type="scientific">Homo sapiens</name>
    <name type="common">Human</name>
    <dbReference type="NCBI Taxonomy" id="9606"/>
    <lineage>
        <taxon>Eukaryota</taxon>
        <taxon>Metazoa</taxon>
        <taxon>Chordata</taxon>
        <taxon>Craniata</taxon>
        <taxon>Vertebrata</taxon>
        <taxon>Euteleostomi</taxon>
        <taxon>Mammalia</taxon>
        <taxon>Eutheria</taxon>
        <taxon>Euarchontoglires</taxon>
        <taxon>Primates</taxon>
        <taxon>Haplorrhini</taxon>
        <taxon>Catarrhini</taxon>
        <taxon>Hominidae</taxon>
        <taxon>Homo</taxon>
    </lineage>
</organism>
<comment type="function">
    <text evidence="2 4">RNA-binding protein that binds to AU-rich element (ARE) sequences of target mRNAs, including VEGF mRNA (PubMed:10710437). May also bind poly-A tracts via RRM 3 (By similarity). May be involved in neuronal differentiation and maintenance (By similarity). Plays a role in the stabilization of GAP43 mRNA and in spatial learning (By similarity).</text>
</comment>
<comment type="subunit">
    <text evidence="2">Interacts with MAP1B light chain LC1.</text>
</comment>
<comment type="interaction">
    <interactant intactId="EBI-749673">
        <id>Q14576</id>
    </interactant>
    <interactant intactId="EBI-1053596">
        <id>Q13627</id>
        <label>DYRK1A</label>
    </interactant>
    <organismsDiffer>false</organismsDiffer>
    <experiments>3</experiments>
</comment>
<comment type="interaction">
    <interactant intactId="EBI-749673">
        <id>Q14576</id>
    </interactant>
    <interactant intactId="EBI-724872">
        <id>Q99250</id>
        <label>SCN2A</label>
    </interactant>
    <organismsDiffer>false</organismsDiffer>
    <experiments>2</experiments>
</comment>
<comment type="interaction">
    <interactant intactId="EBI-749673">
        <id>Q14576</id>
    </interactant>
    <interactant intactId="EBI-2682386">
        <id>Q96PV0</id>
        <label>SYNGAP1</label>
    </interactant>
    <organismsDiffer>false</organismsDiffer>
    <experiments>7</experiments>
</comment>
<comment type="alternative products">
    <event type="alternative splicing"/>
    <isoform>
        <id>Q14576-1</id>
        <name>1</name>
        <sequence type="displayed"/>
    </isoform>
    <isoform>
        <id>Q14576-2</id>
        <name>2</name>
        <sequence type="described" ref="VSP_005789"/>
    </isoform>
</comment>
<comment type="tissue specificity">
    <text>Brain specific.</text>
</comment>
<comment type="domain">
    <text evidence="1">RRM 1 and RRM 2 bind cooperatively to AU-rich sequences in target mRNAs. RRM 3 binds to poly-A mRNA sequences (By similarity).</text>
</comment>
<comment type="similarity">
    <text evidence="8">Belongs to the RRM elav family.</text>
</comment>
<keyword id="KW-0025">Alternative splicing</keyword>
<keyword id="KW-0217">Developmental protein</keyword>
<keyword id="KW-0221">Differentiation</keyword>
<keyword id="KW-0524">Neurogenesis</keyword>
<keyword id="KW-1267">Proteomics identification</keyword>
<keyword id="KW-1185">Reference proteome</keyword>
<keyword id="KW-0677">Repeat</keyword>
<keyword id="KW-0694">RNA-binding</keyword>
<proteinExistence type="evidence at protein level"/>
<feature type="chain" id="PRO_0000081581" description="ELAV-like protein 3">
    <location>
        <begin position="1"/>
        <end position="367"/>
    </location>
</feature>
<feature type="domain" description="RRM 1" evidence="3">
    <location>
        <begin position="39"/>
        <end position="117"/>
    </location>
</feature>
<feature type="domain" description="RRM 2" evidence="3">
    <location>
        <begin position="125"/>
        <end position="205"/>
    </location>
</feature>
<feature type="domain" description="RRM 3" evidence="3">
    <location>
        <begin position="284"/>
        <end position="362"/>
    </location>
</feature>
<feature type="splice variant" id="VSP_005789" description="In isoform 2." evidence="5 6 7">
    <location>
        <begin position="251"/>
        <end position="257"/>
    </location>
</feature>
<feature type="sequence conflict" description="In Ref. 4; BAA21838." evidence="8" ref="4">
    <original>PALPNG</original>
    <variation>RPAQR</variation>
    <location>
        <begin position="20"/>
        <end position="25"/>
    </location>
</feature>
<feature type="sequence conflict" description="In Ref. 1; AAA58677 and 2; AAK67714." evidence="8" ref="1 2">
    <original>QS</original>
    <variation>RD</variation>
    <location>
        <begin position="78"/>
        <end position="79"/>
    </location>
</feature>
<feature type="sequence conflict" description="In Ref. 1; AAA58677 and 2; AAK67714." evidence="8" ref="1 2">
    <original>S</original>
    <variation>P</variation>
    <location>
        <position position="88"/>
    </location>
</feature>
<feature type="sequence conflict" description="In Ref. 4; BAA21838." evidence="8" ref="4">
    <original>A</original>
    <variation>R</variation>
    <location>
        <position position="195"/>
    </location>
</feature>
<feature type="sequence conflict" description="In Ref. 4; BAA21838." evidence="8" ref="4">
    <original>G</original>
    <variation>A</variation>
    <location>
        <position position="248"/>
    </location>
</feature>
<feature type="sequence conflict" description="In Ref. 1; AAA58677 and 4; BAA21838." evidence="8" ref="1 4">
    <location>
        <position position="282"/>
    </location>
</feature>
<feature type="sequence conflict" description="In Ref. 4; BAA21838." evidence="8" ref="4">
    <original>ADE</original>
    <variation>PDQ</variation>
    <location>
        <begin position="295"/>
        <end position="297"/>
    </location>
</feature>
<feature type="sequence conflict" description="In Ref. 4; BAA21838." evidence="8" ref="4">
    <original>V</original>
    <variation>M</variation>
    <location>
        <position position="330"/>
    </location>
</feature>
<feature type="sequence conflict" description="In Ref. 1; AAA58677." evidence="8" ref="1">
    <original>G</original>
    <variation>A</variation>
    <location>
        <position position="351"/>
    </location>
</feature>
<feature type="sequence conflict" description="In Ref. 4; BAA21838." evidence="8" ref="4">
    <original>E</original>
    <variation>Q</variation>
    <location>
        <position position="352"/>
    </location>
</feature>
<gene>
    <name type="primary">ELAVL3</name>
    <name type="synonym">HUC</name>
    <name type="synonym">PLE21</name>
</gene>
<reference key="1">
    <citation type="submission" date="1993-12" db="EMBL/GenBank/DDBJ databases">
        <authorList>
            <person name="Manley T."/>
            <person name="Furneaux H.M."/>
        </authorList>
    </citation>
    <scope>NUCLEOTIDE SEQUENCE [MRNA] (ISOFORM 2)</scope>
    <source>
        <tissue>Brain</tissue>
    </source>
</reference>
<reference key="2">
    <citation type="submission" date="2001-05" db="EMBL/GenBank/DDBJ databases">
        <title>Isolation of HuC cDNA.</title>
        <authorList>
            <person name="Zhang B."/>
            <person name="Yuan J.G."/>
            <person name="Qiang B.Q."/>
        </authorList>
    </citation>
    <scope>NUCLEOTIDE SEQUENCE [MRNA] (ISOFORM 2)</scope>
</reference>
<reference key="3">
    <citation type="journal article" date="2004" name="Nature">
        <title>The DNA sequence and biology of human chromosome 19.</title>
        <authorList>
            <person name="Grimwood J."/>
            <person name="Gordon L.A."/>
            <person name="Olsen A.S."/>
            <person name="Terry A."/>
            <person name="Schmutz J."/>
            <person name="Lamerdin J.E."/>
            <person name="Hellsten U."/>
            <person name="Goodstein D."/>
            <person name="Couronne O."/>
            <person name="Tran-Gyamfi M."/>
            <person name="Aerts A."/>
            <person name="Altherr M."/>
            <person name="Ashworth L."/>
            <person name="Bajorek E."/>
            <person name="Black S."/>
            <person name="Branscomb E."/>
            <person name="Caenepeel S."/>
            <person name="Carrano A.V."/>
            <person name="Caoile C."/>
            <person name="Chan Y.M."/>
            <person name="Christensen M."/>
            <person name="Cleland C.A."/>
            <person name="Copeland A."/>
            <person name="Dalin E."/>
            <person name="Dehal P."/>
            <person name="Denys M."/>
            <person name="Detter J.C."/>
            <person name="Escobar J."/>
            <person name="Flowers D."/>
            <person name="Fotopulos D."/>
            <person name="Garcia C."/>
            <person name="Georgescu A.M."/>
            <person name="Glavina T."/>
            <person name="Gomez M."/>
            <person name="Gonzales E."/>
            <person name="Groza M."/>
            <person name="Hammon N."/>
            <person name="Hawkins T."/>
            <person name="Haydu L."/>
            <person name="Ho I."/>
            <person name="Huang W."/>
            <person name="Israni S."/>
            <person name="Jett J."/>
            <person name="Kadner K."/>
            <person name="Kimball H."/>
            <person name="Kobayashi A."/>
            <person name="Larionov V."/>
            <person name="Leem S.-H."/>
            <person name="Lopez F."/>
            <person name="Lou Y."/>
            <person name="Lowry S."/>
            <person name="Malfatti S."/>
            <person name="Martinez D."/>
            <person name="McCready P.M."/>
            <person name="Medina C."/>
            <person name="Morgan J."/>
            <person name="Nelson K."/>
            <person name="Nolan M."/>
            <person name="Ovcharenko I."/>
            <person name="Pitluck S."/>
            <person name="Pollard M."/>
            <person name="Popkie A.P."/>
            <person name="Predki P."/>
            <person name="Quan G."/>
            <person name="Ramirez L."/>
            <person name="Rash S."/>
            <person name="Retterer J."/>
            <person name="Rodriguez A."/>
            <person name="Rogers S."/>
            <person name="Salamov A."/>
            <person name="Salazar A."/>
            <person name="She X."/>
            <person name="Smith D."/>
            <person name="Slezak T."/>
            <person name="Solovyev V."/>
            <person name="Thayer N."/>
            <person name="Tice H."/>
            <person name="Tsai M."/>
            <person name="Ustaszewska A."/>
            <person name="Vo N."/>
            <person name="Wagner M."/>
            <person name="Wheeler J."/>
            <person name="Wu K."/>
            <person name="Xie G."/>
            <person name="Yang J."/>
            <person name="Dubchak I."/>
            <person name="Furey T.S."/>
            <person name="DeJong P."/>
            <person name="Dickson M."/>
            <person name="Gordon D."/>
            <person name="Eichler E.E."/>
            <person name="Pennacchio L.A."/>
            <person name="Richardson P."/>
            <person name="Stubbs L."/>
            <person name="Rokhsar D.S."/>
            <person name="Myers R.M."/>
            <person name="Rubin E.M."/>
            <person name="Lucas S.M."/>
        </authorList>
    </citation>
    <scope>NUCLEOTIDE SEQUENCE [LARGE SCALE GENOMIC DNA]</scope>
    <source>
        <tissue>Brain</tissue>
    </source>
</reference>
<reference key="4">
    <citation type="journal article" date="2004" name="Genome Res.">
        <title>The status, quality, and expansion of the NIH full-length cDNA project: the Mammalian Gene Collection (MGC).</title>
        <authorList>
            <consortium name="The MGC Project Team"/>
        </authorList>
    </citation>
    <scope>NUCLEOTIDE SEQUENCE [LARGE SCALE MRNA] (ISOFORM 1)</scope>
    <source>
        <tissue>Brain</tissue>
    </source>
</reference>
<reference key="5">
    <citation type="journal article" date="1994" name="Biochem. Biophys. Res. Commun.">
        <title>A hippocampal protein associated with paraneoplastic neurologic syndrome and small cell lung carcinoma.</title>
        <authorList>
            <person name="Sakai K."/>
            <person name="Gofuku M."/>
            <person name="Kitagawa Y."/>
            <person name="Ogasawara T."/>
            <person name="Hirose G."/>
            <person name="Yamazaki M."/>
            <person name="Koh C.S."/>
            <person name="Yanagisawa N."/>
            <person name="Steinman L."/>
        </authorList>
    </citation>
    <scope>NUCLEOTIDE SEQUENCE [MRNA] OF 9-367 (ISOFORM 2)</scope>
    <source>
        <tissue>Hippocampus</tissue>
    </source>
</reference>
<reference key="6">
    <citation type="journal article" date="2000" name="Nucleic Acids Res.">
        <title>RNA-binding analyses of HuC and HuD with the VEGF and c-myc 3'-untranslated regions using a novel ELISA-based assay.</title>
        <authorList>
            <person name="King P.H."/>
        </authorList>
    </citation>
    <scope>FUNCTION</scope>
</reference>
<sequence>MVTQILGAMESQVGGGPAGPALPNGPLLGTNGATDDSKTNLIVNYLPQNMTQDEFKSLFGSIGDIESCKLVRDKITGQSLGYGFVNYSDPNDADKAINTLNGLKLQTKTIKVSYARPSSASIRDANLYVSGLPKTMSQKEMEQLFSQYGRIITSRILVDQVTGVSRGVGFIRFDKRIEAEEAIKGLNGQKPLGAAEPITVKFANNPSQKTGQALLTHLYQSSARRYAGPLHHQTQRFRLDNLLNMAYGVKSPLSLIARFSPIAIDGMSGLAGVGLSGGAAGAGWCIFVYNLSPEADESVLWQLFGPFGAVTNVKVIRDFTTNKCKGFGFVTMTNYDEAAMAIASLNGYRLGERVLQVSFKTSKQHKA</sequence>